<evidence type="ECO:0000255" key="1">
    <source>
        <dbReference type="PROSITE-ProRule" id="PRU10092"/>
    </source>
</evidence>
<evidence type="ECO:0000255" key="2">
    <source>
        <dbReference type="PROSITE-ProRule" id="PRU10093"/>
    </source>
</evidence>
<evidence type="ECO:0000256" key="3">
    <source>
        <dbReference type="SAM" id="MobiDB-lite"/>
    </source>
</evidence>
<evidence type="ECO:0000269" key="4">
    <source>
    </source>
</evidence>
<evidence type="ECO:0000269" key="5">
    <source>
    </source>
</evidence>
<evidence type="ECO:0000269" key="6">
    <source>
    </source>
</evidence>
<evidence type="ECO:0000269" key="7">
    <source>
    </source>
</evidence>
<evidence type="ECO:0000269" key="8">
    <source>
    </source>
</evidence>
<evidence type="ECO:0000305" key="9"/>
<evidence type="ECO:0007829" key="10">
    <source>
        <dbReference type="PDB" id="2QIY"/>
    </source>
</evidence>
<feature type="chain" id="PRO_0000080588" description="Ubiquitin carboxyl-terminal hydrolase 3">
    <location>
        <begin position="1"/>
        <end position="912"/>
    </location>
</feature>
<feature type="domain" description="USP">
    <location>
        <begin position="460"/>
        <end position="911"/>
    </location>
</feature>
<feature type="region of interest" description="Disordered" evidence="3">
    <location>
        <begin position="1"/>
        <end position="30"/>
    </location>
</feature>
<feature type="region of interest" description="Disordered" evidence="3">
    <location>
        <begin position="68"/>
        <end position="176"/>
    </location>
</feature>
<feature type="region of interest" description="Disordered" evidence="3">
    <location>
        <begin position="241"/>
        <end position="384"/>
    </location>
</feature>
<feature type="region of interest" description="Disordered" evidence="3">
    <location>
        <begin position="396"/>
        <end position="417"/>
    </location>
</feature>
<feature type="compositionally biased region" description="Basic and acidic residues" evidence="3">
    <location>
        <begin position="1"/>
        <end position="11"/>
    </location>
</feature>
<feature type="compositionally biased region" description="Low complexity" evidence="3">
    <location>
        <begin position="82"/>
        <end position="95"/>
    </location>
</feature>
<feature type="compositionally biased region" description="Low complexity" evidence="3">
    <location>
        <begin position="102"/>
        <end position="140"/>
    </location>
</feature>
<feature type="compositionally biased region" description="Low complexity" evidence="3">
    <location>
        <begin position="159"/>
        <end position="176"/>
    </location>
</feature>
<feature type="compositionally biased region" description="Basic residues" evidence="3">
    <location>
        <begin position="249"/>
        <end position="259"/>
    </location>
</feature>
<feature type="compositionally biased region" description="Basic and acidic residues" evidence="3">
    <location>
        <begin position="260"/>
        <end position="310"/>
    </location>
</feature>
<feature type="compositionally biased region" description="Low complexity" evidence="3">
    <location>
        <begin position="335"/>
        <end position="355"/>
    </location>
</feature>
<feature type="compositionally biased region" description="Polar residues" evidence="3">
    <location>
        <begin position="361"/>
        <end position="384"/>
    </location>
</feature>
<feature type="compositionally biased region" description="Polar residues" evidence="3">
    <location>
        <begin position="396"/>
        <end position="406"/>
    </location>
</feature>
<feature type="active site" description="Nucleophile" evidence="1 2">
    <location>
        <position position="469"/>
    </location>
</feature>
<feature type="active site" description="Proton acceptor" evidence="1 2">
    <location>
        <position position="861"/>
    </location>
</feature>
<feature type="strand" evidence="10">
    <location>
        <begin position="208"/>
        <end position="212"/>
    </location>
</feature>
<feature type="helix" evidence="10">
    <location>
        <begin position="214"/>
        <end position="228"/>
    </location>
</feature>
<dbReference type="EC" id="3.4.19.12" evidence="4 6"/>
<dbReference type="EMBL" id="M94917">
    <property type="protein sequence ID" value="AAA35191.1"/>
    <property type="molecule type" value="Genomic_DNA"/>
</dbReference>
<dbReference type="EMBL" id="U18917">
    <property type="protein sequence ID" value="AAB64678.1"/>
    <property type="molecule type" value="Genomic_DNA"/>
</dbReference>
<dbReference type="EMBL" id="BK006939">
    <property type="protein sequence ID" value="DAA07812.1"/>
    <property type="molecule type" value="Genomic_DNA"/>
</dbReference>
<dbReference type="PIR" id="B44450">
    <property type="entry name" value="B44450"/>
</dbReference>
<dbReference type="RefSeq" id="NP_011078.3">
    <property type="nucleotide sequence ID" value="NM_001179041.3"/>
</dbReference>
<dbReference type="PDB" id="2QIY">
    <property type="method" value="X-ray"/>
    <property type="resolution" value="1.69 A"/>
    <property type="chains" value="C/D=190-233"/>
</dbReference>
<dbReference type="PDBsum" id="2QIY"/>
<dbReference type="SMR" id="Q01477"/>
<dbReference type="BioGRID" id="36901">
    <property type="interactions" value="1206"/>
</dbReference>
<dbReference type="ComplexPortal" id="CPX-1412">
    <property type="entry name" value="UBP3-BRE5 ubiquitin hydrolase complex"/>
</dbReference>
<dbReference type="DIP" id="DIP-4255N"/>
<dbReference type="FunCoup" id="Q01477">
    <property type="interactions" value="948"/>
</dbReference>
<dbReference type="IntAct" id="Q01477">
    <property type="interactions" value="421"/>
</dbReference>
<dbReference type="MINT" id="Q01477"/>
<dbReference type="STRING" id="4932.YER151C"/>
<dbReference type="MEROPS" id="C19.004"/>
<dbReference type="GlyGen" id="Q01477">
    <property type="glycosylation" value="3 sites, 1 O-linked glycan (2 sites)"/>
</dbReference>
<dbReference type="iPTMnet" id="Q01477"/>
<dbReference type="PaxDb" id="4932-YER151C"/>
<dbReference type="PeptideAtlas" id="Q01477"/>
<dbReference type="EnsemblFungi" id="YER151C_mRNA">
    <property type="protein sequence ID" value="YER151C"/>
    <property type="gene ID" value="YER151C"/>
</dbReference>
<dbReference type="GeneID" id="856895"/>
<dbReference type="KEGG" id="sce:YER151C"/>
<dbReference type="AGR" id="SGD:S000000953"/>
<dbReference type="SGD" id="S000000953">
    <property type="gene designation" value="UBP3"/>
</dbReference>
<dbReference type="VEuPathDB" id="FungiDB:YER151C"/>
<dbReference type="eggNOG" id="KOG1871">
    <property type="taxonomic scope" value="Eukaryota"/>
</dbReference>
<dbReference type="GeneTree" id="ENSGT00940000170514"/>
<dbReference type="HOGENOM" id="CLU_015192_0_0_1"/>
<dbReference type="InParanoid" id="Q01477"/>
<dbReference type="OMA" id="LDPFQTI"/>
<dbReference type="OrthoDB" id="429671at2759"/>
<dbReference type="BioCyc" id="YEAST:G3O-30312-MONOMER"/>
<dbReference type="Reactome" id="R-SCE-5656169">
    <property type="pathway name" value="Termination of translesion DNA synthesis"/>
</dbReference>
<dbReference type="Reactome" id="R-SCE-5689880">
    <property type="pathway name" value="Ub-specific processing proteases"/>
</dbReference>
<dbReference type="BioGRID-ORCS" id="856895">
    <property type="hits" value="4 hits in 10 CRISPR screens"/>
</dbReference>
<dbReference type="PRO" id="PR:Q01477"/>
<dbReference type="Proteomes" id="UP000002311">
    <property type="component" value="Chromosome V"/>
</dbReference>
<dbReference type="RNAct" id="Q01477">
    <property type="molecule type" value="protein"/>
</dbReference>
<dbReference type="GO" id="GO:0005737">
    <property type="term" value="C:cytoplasm"/>
    <property type="evidence" value="ECO:0000314"/>
    <property type="project" value="SGD"/>
</dbReference>
<dbReference type="GO" id="GO:0005829">
    <property type="term" value="C:cytosol"/>
    <property type="evidence" value="ECO:0000314"/>
    <property type="project" value="ComplexPortal"/>
</dbReference>
<dbReference type="GO" id="GO:0005739">
    <property type="term" value="C:mitochondrion"/>
    <property type="evidence" value="ECO:0000314"/>
    <property type="project" value="ComplexPortal"/>
</dbReference>
<dbReference type="GO" id="GO:0005634">
    <property type="term" value="C:nucleus"/>
    <property type="evidence" value="ECO:0000318"/>
    <property type="project" value="GO_Central"/>
</dbReference>
<dbReference type="GO" id="GO:1990861">
    <property type="term" value="C:Ubp3-Bre5 deubiquitination complex"/>
    <property type="evidence" value="ECO:0000353"/>
    <property type="project" value="SGD"/>
</dbReference>
<dbReference type="GO" id="GO:0004843">
    <property type="term" value="F:cysteine-type deubiquitinase activity"/>
    <property type="evidence" value="ECO:0000314"/>
    <property type="project" value="SGD"/>
</dbReference>
<dbReference type="GO" id="GO:0003729">
    <property type="term" value="F:mRNA binding"/>
    <property type="evidence" value="ECO:0000314"/>
    <property type="project" value="SGD"/>
</dbReference>
<dbReference type="GO" id="GO:1901525">
    <property type="term" value="P:negative regulation of mitophagy"/>
    <property type="evidence" value="ECO:0000315"/>
    <property type="project" value="ComplexPortal"/>
</dbReference>
<dbReference type="GO" id="GO:0016579">
    <property type="term" value="P:protein deubiquitination"/>
    <property type="evidence" value="ECO:0000314"/>
    <property type="project" value="SGD"/>
</dbReference>
<dbReference type="GO" id="GO:0045053">
    <property type="term" value="P:protein retention in Golgi apparatus"/>
    <property type="evidence" value="ECO:0000315"/>
    <property type="project" value="SGD"/>
</dbReference>
<dbReference type="GO" id="GO:0006508">
    <property type="term" value="P:proteolysis"/>
    <property type="evidence" value="ECO:0007669"/>
    <property type="project" value="UniProtKB-KW"/>
</dbReference>
<dbReference type="GO" id="GO:0060628">
    <property type="term" value="P:regulation of ER to Golgi vesicle-mediated transport"/>
    <property type="evidence" value="ECO:0000315"/>
    <property type="project" value="SGD"/>
</dbReference>
<dbReference type="GO" id="GO:0031647">
    <property type="term" value="P:regulation of protein stability"/>
    <property type="evidence" value="ECO:0000318"/>
    <property type="project" value="GO_Central"/>
</dbReference>
<dbReference type="GO" id="GO:0047484">
    <property type="term" value="P:regulation of response to osmotic stress"/>
    <property type="evidence" value="ECO:0000315"/>
    <property type="project" value="SGD"/>
</dbReference>
<dbReference type="GO" id="GO:2000156">
    <property type="term" value="P:regulation of retrograde vesicle-mediated transport, Golgi to ER"/>
    <property type="evidence" value="ECO:0000303"/>
    <property type="project" value="ComplexPortal"/>
</dbReference>
<dbReference type="GO" id="GO:0034517">
    <property type="term" value="P:ribophagy"/>
    <property type="evidence" value="ECO:0000315"/>
    <property type="project" value="SGD"/>
</dbReference>
<dbReference type="GO" id="GO:0034063">
    <property type="term" value="P:stress granule assembly"/>
    <property type="evidence" value="ECO:0000314"/>
    <property type="project" value="ComplexPortal"/>
</dbReference>
<dbReference type="CDD" id="cd02257">
    <property type="entry name" value="Peptidase_C19"/>
    <property type="match status" value="1"/>
</dbReference>
<dbReference type="Gene3D" id="3.90.70.10">
    <property type="entry name" value="Cysteine proteinases"/>
    <property type="match status" value="1"/>
</dbReference>
<dbReference type="InterPro" id="IPR038765">
    <property type="entry name" value="Papain-like_cys_pep_sf"/>
</dbReference>
<dbReference type="InterPro" id="IPR050164">
    <property type="entry name" value="Peptidase_C19"/>
</dbReference>
<dbReference type="InterPro" id="IPR001394">
    <property type="entry name" value="Peptidase_C19_UCH"/>
</dbReference>
<dbReference type="InterPro" id="IPR018200">
    <property type="entry name" value="USP_CS"/>
</dbReference>
<dbReference type="InterPro" id="IPR028889">
    <property type="entry name" value="USP_dom"/>
</dbReference>
<dbReference type="PANTHER" id="PTHR24006">
    <property type="entry name" value="UBIQUITIN CARBOXYL-TERMINAL HYDROLASE"/>
    <property type="match status" value="1"/>
</dbReference>
<dbReference type="PANTHER" id="PTHR24006:SF687">
    <property type="entry name" value="UBIQUITIN CARBOXYL-TERMINAL HYDROLASE 10"/>
    <property type="match status" value="1"/>
</dbReference>
<dbReference type="Pfam" id="PF00443">
    <property type="entry name" value="UCH"/>
    <property type="match status" value="1"/>
</dbReference>
<dbReference type="SUPFAM" id="SSF54001">
    <property type="entry name" value="Cysteine proteinases"/>
    <property type="match status" value="1"/>
</dbReference>
<dbReference type="PROSITE" id="PS00972">
    <property type="entry name" value="USP_1"/>
    <property type="match status" value="1"/>
</dbReference>
<dbReference type="PROSITE" id="PS00973">
    <property type="entry name" value="USP_2"/>
    <property type="match status" value="1"/>
</dbReference>
<dbReference type="PROSITE" id="PS50235">
    <property type="entry name" value="USP_3"/>
    <property type="match status" value="1"/>
</dbReference>
<organism>
    <name type="scientific">Saccharomyces cerevisiae (strain ATCC 204508 / S288c)</name>
    <name type="common">Baker's yeast</name>
    <dbReference type="NCBI Taxonomy" id="559292"/>
    <lineage>
        <taxon>Eukaryota</taxon>
        <taxon>Fungi</taxon>
        <taxon>Dikarya</taxon>
        <taxon>Ascomycota</taxon>
        <taxon>Saccharomycotina</taxon>
        <taxon>Saccharomycetes</taxon>
        <taxon>Saccharomycetales</taxon>
        <taxon>Saccharomycetaceae</taxon>
        <taxon>Saccharomyces</taxon>
    </lineage>
</organism>
<sequence length="912" mass="101917">MNMQDANKEESYSMYPKTSSPPPPTPTNMQIPIYQAPLQMYGYTQAPYLYPTQIPAYSFNMVNQNQPIYHQSGSPHHLPPQNNINGGSTTNNNNINKKKWHSNGITNNNGSSGNQGANSSGSGMSYNKSHTYHHNYSNNHIPMMASPNSGSNAGMKKQTNSSNGNGSSATSPSYSSYNSSSQYDLYKFDVTKLKNLKENSSNLIQLPLFINTTEAEFAAASVQRYELNMKALNLNSESLENSSVEKSSAHHHTKSHSIPKHNEEVKTETHGEEEDAHDKKPHASKDAHELKKKTEVKKEDAKQDRNEKVIQEPQATVLPVVDKKEPEESVEENTSKTSSPSPSPPAAKSWSAIASDAIKSRQASNKTVSGSMVTKTPISGTTAGVSSTNMAAATIGKSSSPLLSKQPQKKDKKYVPPSTKGIEPLGSIALRMCFDPDFISYVLRNKDVENKIPVHSIIPRGIINRANICFMSSVLQVLLYCKPFIDVINVLSTRNTNSRVGTSSCKLLDACLTMYKQFDKETYEKKFLENADDAEKTTESDAKKSSKSKSFQHCATADAVKPDEFYKTLSTIPKFKDLQWGHQEDAEEFLTHLLDQLHEELISAIDGLTDNEIQNMLQSINDEQLKVFFIRNLSRYGKAEFIKNASPRLKELIEKYGVINDDSTEENGWHEVSGSSKRGKKTKTAAKRTVEIVPSPISKLFGGQFRSVLDIPNNKESQSITLDPFQTIQLDISDAGVNDLETAFKKFSEYELLPFKSSSGNDVEAKKQTFIDKLPQVLLIQFKRFSFINNVNKDNAMTNYNAYNGRIEKIRKKIKYGHELIIPEESMSSITLKNNTSGIDDRRYKLTGVIYHHGVSSDGGHYTADVYHSEHNKWYRIDDVNITELEDDDVLKGGEEASDSRTAYILMYQKRN</sequence>
<gene>
    <name type="primary">UBP3</name>
    <name type="ordered locus">YER151C</name>
</gene>
<proteinExistence type="evidence at protein level"/>
<protein>
    <recommendedName>
        <fullName>Ubiquitin carboxyl-terminal hydrolase 3</fullName>
        <ecNumber evidence="4 6">3.4.19.12</ecNumber>
    </recommendedName>
    <alternativeName>
        <fullName>Deubiquitinating enzyme 3</fullName>
    </alternativeName>
    <alternativeName>
        <fullName>Ubiquitin thioesterase 3</fullName>
    </alternativeName>
    <alternativeName>
        <fullName>Ubiquitin-specific-processing protease 3</fullName>
    </alternativeName>
</protein>
<reference key="1">
    <citation type="journal article" date="1992" name="J. Biol. Chem.">
        <title>Ubiquitin-specific proteases of Saccharomyces cerevisiae. Cloning of UBP2 and UBP3, and functional analysis of the UBP gene family.</title>
        <authorList>
            <person name="Baker R.T."/>
            <person name="Tobias J.W."/>
            <person name="Varshavsky A."/>
        </authorList>
    </citation>
    <scope>NUCLEOTIDE SEQUENCE [GENOMIC DNA]</scope>
</reference>
<reference key="2">
    <citation type="journal article" date="1997" name="Nature">
        <title>The nucleotide sequence of Saccharomyces cerevisiae chromosome V.</title>
        <authorList>
            <person name="Dietrich F.S."/>
            <person name="Mulligan J.T."/>
            <person name="Hennessy K.M."/>
            <person name="Yelton M.A."/>
            <person name="Allen E."/>
            <person name="Araujo R."/>
            <person name="Aviles E."/>
            <person name="Berno A."/>
            <person name="Brennan T."/>
            <person name="Carpenter J."/>
            <person name="Chen E."/>
            <person name="Cherry J.M."/>
            <person name="Chung E."/>
            <person name="Duncan M."/>
            <person name="Guzman E."/>
            <person name="Hartzell G."/>
            <person name="Hunicke-Smith S."/>
            <person name="Hyman R.W."/>
            <person name="Kayser A."/>
            <person name="Komp C."/>
            <person name="Lashkari D."/>
            <person name="Lew H."/>
            <person name="Lin D."/>
            <person name="Mosedale D."/>
            <person name="Nakahara K."/>
            <person name="Namath A."/>
            <person name="Norgren R."/>
            <person name="Oefner P."/>
            <person name="Oh C."/>
            <person name="Petel F.X."/>
            <person name="Roberts D."/>
            <person name="Sehl P."/>
            <person name="Schramm S."/>
            <person name="Shogren T."/>
            <person name="Smith V."/>
            <person name="Taylor P."/>
            <person name="Wei Y."/>
            <person name="Botstein D."/>
            <person name="Davis R.W."/>
        </authorList>
    </citation>
    <scope>NUCLEOTIDE SEQUENCE [LARGE SCALE GENOMIC DNA]</scope>
    <source>
        <strain>ATCC 204508 / S288c</strain>
    </source>
</reference>
<reference key="3">
    <citation type="journal article" date="2014" name="G3 (Bethesda)">
        <title>The reference genome sequence of Saccharomyces cerevisiae: Then and now.</title>
        <authorList>
            <person name="Engel S.R."/>
            <person name="Dietrich F.S."/>
            <person name="Fisk D.G."/>
            <person name="Binkley G."/>
            <person name="Balakrishnan R."/>
            <person name="Costanzo M.C."/>
            <person name="Dwight S.S."/>
            <person name="Hitz B.C."/>
            <person name="Karra K."/>
            <person name="Nash R.S."/>
            <person name="Weng S."/>
            <person name="Wong E.D."/>
            <person name="Lloyd P."/>
            <person name="Skrzypek M.S."/>
            <person name="Miyasato S.R."/>
            <person name="Simison M."/>
            <person name="Cherry J.M."/>
        </authorList>
    </citation>
    <scope>GENOME REANNOTATION</scope>
    <source>
        <strain>ATCC 204508 / S288c</strain>
    </source>
</reference>
<reference key="4">
    <citation type="journal article" date="1996" name="Cell">
        <title>A deubiquitinating enzyme interacts with SIR4 and regulates silencing in S. cerevisiae.</title>
        <authorList>
            <person name="Moazed D."/>
            <person name="Johnson D."/>
        </authorList>
    </citation>
    <scope>FUNCTION</scope>
</reference>
<reference key="5">
    <citation type="journal article" date="2003" name="Nat. Cell Biol.">
        <title>Ubp3 requires a cofactor, Bre5, to specifically de-ubiquitinate the COPII protein, Sec23.</title>
        <authorList>
            <person name="Cohen M."/>
            <person name="Stutz F."/>
            <person name="Belgareh N."/>
            <person name="Haguenauer-Tsapis R."/>
            <person name="Dargemont C."/>
        </authorList>
    </citation>
    <scope>FUNCTION</scope>
    <scope>SUBUNIT</scope>
    <scope>CATALYTIC ACTIVITY</scope>
</reference>
<reference key="6">
    <citation type="journal article" date="2003" name="Nature">
        <title>Global analysis of protein expression in yeast.</title>
        <authorList>
            <person name="Ghaemmaghami S."/>
            <person name="Huh W.-K."/>
            <person name="Bower K."/>
            <person name="Howson R.W."/>
            <person name="Belle A."/>
            <person name="Dephoure N."/>
            <person name="O'Shea E.K."/>
            <person name="Weissman J.S."/>
        </authorList>
    </citation>
    <scope>LEVEL OF PROTEIN EXPRESSION [LARGE SCALE ANALYSIS]</scope>
</reference>
<reference key="7">
    <citation type="journal article" date="2008" name="Mol. Cell. Proteomics">
        <title>A multidimensional chromatography technology for in-depth phosphoproteome analysis.</title>
        <authorList>
            <person name="Albuquerque C.P."/>
            <person name="Smolka M.B."/>
            <person name="Payne S.H."/>
            <person name="Bafna V."/>
            <person name="Eng J."/>
            <person name="Zhou H."/>
        </authorList>
    </citation>
    <scope>IDENTIFICATION BY MASS SPECTROMETRY [LARGE SCALE ANALYSIS]</scope>
</reference>
<reference key="8">
    <citation type="journal article" date="2010" name="EMBO Rep.">
        <title>Cdc48 and Ufd3, new partners of the ubiquitin protease Ubp3, are required for ribophagy.</title>
        <authorList>
            <person name="Ossareh-Nazari B."/>
            <person name="Bonizec M."/>
            <person name="Cohen M."/>
            <person name="Dokudovskaya S."/>
            <person name="Delalande F."/>
            <person name="Schaeffer C."/>
            <person name="Van Dorsselaer A."/>
            <person name="Dargemont C."/>
        </authorList>
    </citation>
    <scope>FUNCTION</scope>
    <scope>IDENTIFICATION IN A COMPLEX WITH DOA1; BRE5 AND CDC48</scope>
    <scope>INTERACTION WITH DOA1 AND CDC48</scope>
</reference>
<reference key="9">
    <citation type="journal article" date="2007" name="J. Mol. Biol.">
        <title>Molecular basis for bre5 cofactor recognition by the ubp3 deubiquitylating enzyme.</title>
        <authorList>
            <person name="Li K."/>
            <person name="Ossareh-Nazari B."/>
            <person name="Liu X."/>
            <person name="Dargemont C."/>
            <person name="Marmorstein R."/>
        </authorList>
    </citation>
    <scope>X-RAY CRYSTALLOGRAPHY (1.69 ANGSTROMS) OF 190-233 IN COMPLEX WITH BRE5</scope>
    <scope>FUNCTION</scope>
    <scope>CATALYTIC ACTIVITY</scope>
    <scope>SUBUNIT</scope>
</reference>
<comment type="function">
    <text evidence="4 6 7 8">Has an ATP-independent isopeptidase activity, cleaving at the C-terminus of the ubiquitin moiety in natural or engineered linear fusion proteins, irrespective of their size or the presence of an N-terminal extension to ubiquitin (PubMed:12778054, PubMed:17632125). Plays a role in regulation of silencing by interacting with SIR4 (PubMed:8752220). Also, in conjunction with BRE5, cleaves ubiquitin, leading to the subsequent mono-ubiquitination of SEC23 (PubMed:12778054). Required for ribophagy, a process which relocalizes ribosomal particles into the vacuole for degradation in response to starvation (PubMed:20508643).</text>
</comment>
<comment type="catalytic activity">
    <reaction evidence="4 6">
        <text>Thiol-dependent hydrolysis of ester, thioester, amide, peptide and isopeptide bonds formed by the C-terminal Gly of ubiquitin (a 76-residue protein attached to proteins as an intracellular targeting signal).</text>
        <dbReference type="EC" id="3.4.19.12"/>
    </reaction>
</comment>
<comment type="subunit">
    <text evidence="4 6 7">Heterotetramer with BRE5; contains two molecules of BRE5 and two molecules of UBP3 (PubMed:12778054, PubMed:17632125). Forms a complex composed of CDC48, DOA1, deubiquitinase UBP3 and probably BRE5. Within the complex interacts directly with DOA1 and CDC48 in a BRE5-independent manner (PubMed:20508643).</text>
</comment>
<comment type="interaction">
    <interactant intactId="EBI-19834">
        <id>Q01477</id>
    </interactant>
    <interactant intactId="EBI-28528">
        <id>P53741</id>
        <label>BRE5</label>
    </interactant>
    <organismsDiffer>false</organismsDiffer>
    <experiments>12</experiments>
</comment>
<comment type="interaction">
    <interactant intactId="EBI-19834">
        <id>Q01477</id>
    </interactant>
    <interactant intactId="EBI-4308">
        <id>P25694</id>
        <label>CDC48</label>
    </interactant>
    <organismsDiffer>false</organismsDiffer>
    <experiments>4</experiments>
</comment>
<comment type="interaction">
    <interactant intactId="EBI-19834">
        <id>Q01477</id>
    </interactant>
    <interactant intactId="EBI-6017">
        <id>P36037</id>
        <label>DOA1</label>
    </interactant>
    <organismsDiffer>false</organismsDiffer>
    <experiments>4</experiments>
</comment>
<comment type="interaction">
    <interactant intactId="EBI-19834">
        <id>Q01477</id>
    </interactant>
    <interactant intactId="EBI-8437">
        <id>P32485</id>
        <label>HOG1</label>
    </interactant>
    <organismsDiffer>false</organismsDiffer>
    <experiments>3</experiments>
</comment>
<comment type="miscellaneous">
    <text evidence="5">Present with 2210 molecules/cell in log phase SD medium.</text>
</comment>
<comment type="similarity">
    <text evidence="9">Belongs to the peptidase C19 family.</text>
</comment>
<name>UBP3_YEAST</name>
<keyword id="KW-0002">3D-structure</keyword>
<keyword id="KW-0378">Hydrolase</keyword>
<keyword id="KW-0645">Protease</keyword>
<keyword id="KW-1185">Reference proteome</keyword>
<keyword id="KW-0788">Thiol protease</keyword>
<keyword id="KW-0833">Ubl conjugation pathway</keyword>
<accession>Q01477</accession>
<accession>D3DM58</accession>